<evidence type="ECO:0000255" key="1">
    <source>
        <dbReference type="HAMAP-Rule" id="MF_01322"/>
    </source>
</evidence>
<dbReference type="EC" id="2.7.7.6" evidence="1"/>
<dbReference type="EMBL" id="AE017282">
    <property type="protein sequence ID" value="AAU92667.1"/>
    <property type="molecule type" value="Genomic_DNA"/>
</dbReference>
<dbReference type="RefSeq" id="WP_010960367.1">
    <property type="nucleotide sequence ID" value="NC_002977.6"/>
</dbReference>
<dbReference type="SMR" id="Q60A05"/>
<dbReference type="STRING" id="243233.MCA1067"/>
<dbReference type="GeneID" id="88223364"/>
<dbReference type="KEGG" id="mca:MCA1067"/>
<dbReference type="eggNOG" id="COG0086">
    <property type="taxonomic scope" value="Bacteria"/>
</dbReference>
<dbReference type="HOGENOM" id="CLU_000524_3_1_6"/>
<dbReference type="Proteomes" id="UP000006821">
    <property type="component" value="Chromosome"/>
</dbReference>
<dbReference type="GO" id="GO:0000428">
    <property type="term" value="C:DNA-directed RNA polymerase complex"/>
    <property type="evidence" value="ECO:0007669"/>
    <property type="project" value="UniProtKB-KW"/>
</dbReference>
<dbReference type="GO" id="GO:0003677">
    <property type="term" value="F:DNA binding"/>
    <property type="evidence" value="ECO:0007669"/>
    <property type="project" value="UniProtKB-UniRule"/>
</dbReference>
<dbReference type="GO" id="GO:0003899">
    <property type="term" value="F:DNA-directed RNA polymerase activity"/>
    <property type="evidence" value="ECO:0007669"/>
    <property type="project" value="UniProtKB-UniRule"/>
</dbReference>
<dbReference type="GO" id="GO:0000287">
    <property type="term" value="F:magnesium ion binding"/>
    <property type="evidence" value="ECO:0007669"/>
    <property type="project" value="UniProtKB-UniRule"/>
</dbReference>
<dbReference type="GO" id="GO:0008270">
    <property type="term" value="F:zinc ion binding"/>
    <property type="evidence" value="ECO:0007669"/>
    <property type="project" value="UniProtKB-UniRule"/>
</dbReference>
<dbReference type="GO" id="GO:0006351">
    <property type="term" value="P:DNA-templated transcription"/>
    <property type="evidence" value="ECO:0007669"/>
    <property type="project" value="UniProtKB-UniRule"/>
</dbReference>
<dbReference type="CDD" id="cd02655">
    <property type="entry name" value="RNAP_beta'_C"/>
    <property type="match status" value="1"/>
</dbReference>
<dbReference type="CDD" id="cd01609">
    <property type="entry name" value="RNAP_beta'_N"/>
    <property type="match status" value="1"/>
</dbReference>
<dbReference type="FunFam" id="1.10.132.30:FF:000003">
    <property type="entry name" value="DNA-directed RNA polymerase subunit beta"/>
    <property type="match status" value="1"/>
</dbReference>
<dbReference type="FunFam" id="1.10.150.390:FF:000002">
    <property type="entry name" value="DNA-directed RNA polymerase subunit beta"/>
    <property type="match status" value="1"/>
</dbReference>
<dbReference type="FunFam" id="1.10.40.90:FF:000001">
    <property type="entry name" value="DNA-directed RNA polymerase subunit beta"/>
    <property type="match status" value="1"/>
</dbReference>
<dbReference type="FunFam" id="4.10.860.120:FF:000001">
    <property type="entry name" value="DNA-directed RNA polymerase subunit beta"/>
    <property type="match status" value="1"/>
</dbReference>
<dbReference type="Gene3D" id="1.10.132.30">
    <property type="match status" value="1"/>
</dbReference>
<dbReference type="Gene3D" id="1.10.150.390">
    <property type="match status" value="1"/>
</dbReference>
<dbReference type="Gene3D" id="1.10.1790.20">
    <property type="match status" value="1"/>
</dbReference>
<dbReference type="Gene3D" id="1.10.40.90">
    <property type="match status" value="1"/>
</dbReference>
<dbReference type="Gene3D" id="2.40.40.20">
    <property type="match status" value="1"/>
</dbReference>
<dbReference type="Gene3D" id="2.40.50.100">
    <property type="match status" value="3"/>
</dbReference>
<dbReference type="Gene3D" id="4.10.860.120">
    <property type="entry name" value="RNA polymerase II, clamp domain"/>
    <property type="match status" value="1"/>
</dbReference>
<dbReference type="Gene3D" id="1.10.274.100">
    <property type="entry name" value="RNA polymerase Rpb1, domain 3"/>
    <property type="match status" value="1"/>
</dbReference>
<dbReference type="HAMAP" id="MF_01322">
    <property type="entry name" value="RNApol_bact_RpoC"/>
    <property type="match status" value="1"/>
</dbReference>
<dbReference type="InterPro" id="IPR045867">
    <property type="entry name" value="DNA-dir_RpoC_beta_prime"/>
</dbReference>
<dbReference type="InterPro" id="IPR012754">
    <property type="entry name" value="DNA-dir_RpoC_beta_prime_bact"/>
</dbReference>
<dbReference type="InterPro" id="IPR000722">
    <property type="entry name" value="RNA_pol_asu"/>
</dbReference>
<dbReference type="InterPro" id="IPR006592">
    <property type="entry name" value="RNA_pol_N"/>
</dbReference>
<dbReference type="InterPro" id="IPR007080">
    <property type="entry name" value="RNA_pol_Rpb1_1"/>
</dbReference>
<dbReference type="InterPro" id="IPR007066">
    <property type="entry name" value="RNA_pol_Rpb1_3"/>
</dbReference>
<dbReference type="InterPro" id="IPR042102">
    <property type="entry name" value="RNA_pol_Rpb1_3_sf"/>
</dbReference>
<dbReference type="InterPro" id="IPR007083">
    <property type="entry name" value="RNA_pol_Rpb1_4"/>
</dbReference>
<dbReference type="InterPro" id="IPR007081">
    <property type="entry name" value="RNA_pol_Rpb1_5"/>
</dbReference>
<dbReference type="InterPro" id="IPR044893">
    <property type="entry name" value="RNA_pol_Rpb1_clamp_domain"/>
</dbReference>
<dbReference type="InterPro" id="IPR038120">
    <property type="entry name" value="Rpb1_funnel_sf"/>
</dbReference>
<dbReference type="NCBIfam" id="TIGR02386">
    <property type="entry name" value="rpoC_TIGR"/>
    <property type="match status" value="1"/>
</dbReference>
<dbReference type="PANTHER" id="PTHR19376">
    <property type="entry name" value="DNA-DIRECTED RNA POLYMERASE"/>
    <property type="match status" value="1"/>
</dbReference>
<dbReference type="PANTHER" id="PTHR19376:SF54">
    <property type="entry name" value="DNA-DIRECTED RNA POLYMERASE SUBUNIT BETA"/>
    <property type="match status" value="1"/>
</dbReference>
<dbReference type="Pfam" id="PF04997">
    <property type="entry name" value="RNA_pol_Rpb1_1"/>
    <property type="match status" value="1"/>
</dbReference>
<dbReference type="Pfam" id="PF00623">
    <property type="entry name" value="RNA_pol_Rpb1_2"/>
    <property type="match status" value="2"/>
</dbReference>
<dbReference type="Pfam" id="PF04983">
    <property type="entry name" value="RNA_pol_Rpb1_3"/>
    <property type="match status" value="1"/>
</dbReference>
<dbReference type="Pfam" id="PF05000">
    <property type="entry name" value="RNA_pol_Rpb1_4"/>
    <property type="match status" value="1"/>
</dbReference>
<dbReference type="Pfam" id="PF04998">
    <property type="entry name" value="RNA_pol_Rpb1_5"/>
    <property type="match status" value="1"/>
</dbReference>
<dbReference type="SMART" id="SM00663">
    <property type="entry name" value="RPOLA_N"/>
    <property type="match status" value="1"/>
</dbReference>
<dbReference type="SUPFAM" id="SSF64484">
    <property type="entry name" value="beta and beta-prime subunits of DNA dependent RNA-polymerase"/>
    <property type="match status" value="1"/>
</dbReference>
<organism>
    <name type="scientific">Methylococcus capsulatus (strain ATCC 33009 / NCIMB 11132 / Bath)</name>
    <dbReference type="NCBI Taxonomy" id="243233"/>
    <lineage>
        <taxon>Bacteria</taxon>
        <taxon>Pseudomonadati</taxon>
        <taxon>Pseudomonadota</taxon>
        <taxon>Gammaproteobacteria</taxon>
        <taxon>Methylococcales</taxon>
        <taxon>Methylococcaceae</taxon>
        <taxon>Methylococcus</taxon>
    </lineage>
</organism>
<feature type="chain" id="PRO_0000225551" description="DNA-directed RNA polymerase subunit beta'">
    <location>
        <begin position="1"/>
        <end position="1400"/>
    </location>
</feature>
<feature type="binding site" evidence="1">
    <location>
        <position position="70"/>
    </location>
    <ligand>
        <name>Zn(2+)</name>
        <dbReference type="ChEBI" id="CHEBI:29105"/>
        <label>1</label>
    </ligand>
</feature>
<feature type="binding site" evidence="1">
    <location>
        <position position="72"/>
    </location>
    <ligand>
        <name>Zn(2+)</name>
        <dbReference type="ChEBI" id="CHEBI:29105"/>
        <label>1</label>
    </ligand>
</feature>
<feature type="binding site" evidence="1">
    <location>
        <position position="85"/>
    </location>
    <ligand>
        <name>Zn(2+)</name>
        <dbReference type="ChEBI" id="CHEBI:29105"/>
        <label>1</label>
    </ligand>
</feature>
<feature type="binding site" evidence="1">
    <location>
        <position position="88"/>
    </location>
    <ligand>
        <name>Zn(2+)</name>
        <dbReference type="ChEBI" id="CHEBI:29105"/>
        <label>1</label>
    </ligand>
</feature>
<feature type="binding site" evidence="1">
    <location>
        <position position="460"/>
    </location>
    <ligand>
        <name>Mg(2+)</name>
        <dbReference type="ChEBI" id="CHEBI:18420"/>
    </ligand>
</feature>
<feature type="binding site" evidence="1">
    <location>
        <position position="462"/>
    </location>
    <ligand>
        <name>Mg(2+)</name>
        <dbReference type="ChEBI" id="CHEBI:18420"/>
    </ligand>
</feature>
<feature type="binding site" evidence="1">
    <location>
        <position position="464"/>
    </location>
    <ligand>
        <name>Mg(2+)</name>
        <dbReference type="ChEBI" id="CHEBI:18420"/>
    </ligand>
</feature>
<feature type="binding site" evidence="1">
    <location>
        <position position="814"/>
    </location>
    <ligand>
        <name>Zn(2+)</name>
        <dbReference type="ChEBI" id="CHEBI:29105"/>
        <label>2</label>
    </ligand>
</feature>
<feature type="binding site" evidence="1">
    <location>
        <position position="888"/>
    </location>
    <ligand>
        <name>Zn(2+)</name>
        <dbReference type="ChEBI" id="CHEBI:29105"/>
        <label>2</label>
    </ligand>
</feature>
<feature type="binding site" evidence="1">
    <location>
        <position position="895"/>
    </location>
    <ligand>
        <name>Zn(2+)</name>
        <dbReference type="ChEBI" id="CHEBI:29105"/>
        <label>2</label>
    </ligand>
</feature>
<feature type="binding site" evidence="1">
    <location>
        <position position="898"/>
    </location>
    <ligand>
        <name>Zn(2+)</name>
        <dbReference type="ChEBI" id="CHEBI:29105"/>
        <label>2</label>
    </ligand>
</feature>
<sequence length="1400" mass="155233">MKDLINFLKRQTQSEEFDAIRISLASPDMIRSWSYGEVKKPETINYRTFKPERDGLFCAKIFGPVSDYECLCGKYKRLKHRGVICEKCGVEVTLSKVRRERMGHIELASPVAHIWFLKSLPSRIALLLDMQLREIERVLYFESYVVIDPGMTPLTRGQLLGEEEYQKLVEQYDDEFTAKMGAEAIRELLRTMDLHAEVVQLREEINGTNSETKIKKYTKRLKAIESMLASNNRPEWMILTVLPVLPPDLRPLVPLDGGRFATSDLNDLYRRVINRNNRLKRLLDLNAPDIIVRNEKRMLQESVDALLDNGRRGRAITGSNKRPLKSLADMIKGKQGRFRQNLLGKRVDYSGRSVIVVGPTLRLHQCGLPKKMALELFKPFIFSKLQFRGLATTIKAAKKMVEREAPEVWDILDEVIREHPVMLNRAPTLHRLGIQAFEPILIEGKAIQLHPLVCTAFNADFDGDQMAVHVPLSLEAQLEARSLMMATNNILSPANGEPIINPTQDVVMGLYYMSRERLFAKGEGMTFASVDEAEQAFLNGAVDLHAKVVVRVREVVVGEGGERTESIKRVQTTVGRALIWNIVPEGIPFEMVNVDMTKKAISRLINHAYRTLGIKASVIFADQLMYLGFSHATRAGVSFGVEDMEIPVRKDEIIQAAEREVKEIQNQFASGLVTDGERYNKVVDIWSHANDQVAKVMMEGLGVDEVTVGNGETIKQKSFNSIFMMADSGARGSAAQIRQLAGMRGLMAKPDGSIIETPITANFREGLTVLQYFISTHGARKGLADTALKTANSGYLTRRLVDVAQDLVITEDDCGTTDGLQMAPLIEGGDVVEPLAERVLGRVLAEHAVDPASGDVLLEAGSMLDERAVQLLEQHGVDNVRVRSVITCKTRYGVCASCYGRDLGRGHKVNIGEAIGVIAAQSIGEPGTQLTMRTFHIGGAASRSAAISNVEVKSSGQIRLTNLKTVVNRDNALVAVSRSGEISVIDEHGRERERYKIPYGAVLSVREGGAVKAGQIVVNWDPHTHPVISEVRGRAKLIDFVEGVTVREQSDEMTGLSSMVVIDPKQRGGAGKELRPLVKLVDEEGNDIFIPSTEITAQYFLPAGAIIGIRDGDLVEVGDVLARIPQESSKTRDITGGLPRVADLFEARKTKDPAILAEATGTVSFGKETKGKRRLIITDASGEQHEVMVPKWRNITVFEGEHVEQGETIAEGELTPHDILRLRGTAELASYLVKEIQDVYRLQGVKINDKHIEVIIRQMLRKVEITDPGDSSFLRGEQVDRSRLLEENDRLEEEGKVPACYEPVLLGITKASLSTESFISAASFQETTRVLTEAAIRGSTDRLQGLKENVIVGRLIPAGTGLAYHTERRERAKLGEVTEPETPIIDTAEVEEALKQAFSL</sequence>
<reference key="1">
    <citation type="journal article" date="2004" name="PLoS Biol.">
        <title>Genomic insights into methanotrophy: the complete genome sequence of Methylococcus capsulatus (Bath).</title>
        <authorList>
            <person name="Ward N.L."/>
            <person name="Larsen O."/>
            <person name="Sakwa J."/>
            <person name="Bruseth L."/>
            <person name="Khouri H.M."/>
            <person name="Durkin A.S."/>
            <person name="Dimitrov G."/>
            <person name="Jiang L."/>
            <person name="Scanlan D."/>
            <person name="Kang K.H."/>
            <person name="Lewis M.R."/>
            <person name="Nelson K.E."/>
            <person name="Methe B.A."/>
            <person name="Wu M."/>
            <person name="Heidelberg J.F."/>
            <person name="Paulsen I.T."/>
            <person name="Fouts D.E."/>
            <person name="Ravel J."/>
            <person name="Tettelin H."/>
            <person name="Ren Q."/>
            <person name="Read T.D."/>
            <person name="DeBoy R.T."/>
            <person name="Seshadri R."/>
            <person name="Salzberg S.L."/>
            <person name="Jensen H.B."/>
            <person name="Birkeland N.K."/>
            <person name="Nelson W.C."/>
            <person name="Dodson R.J."/>
            <person name="Grindhaug S.H."/>
            <person name="Holt I.E."/>
            <person name="Eidhammer I."/>
            <person name="Jonasen I."/>
            <person name="Vanaken S."/>
            <person name="Utterback T.R."/>
            <person name="Feldblyum T.V."/>
            <person name="Fraser C.M."/>
            <person name="Lillehaug J.R."/>
            <person name="Eisen J.A."/>
        </authorList>
    </citation>
    <scope>NUCLEOTIDE SEQUENCE [LARGE SCALE GENOMIC DNA]</scope>
    <source>
        <strain>ATCC 33009 / NCIMB 11132 / Bath</strain>
    </source>
</reference>
<comment type="function">
    <text evidence="1">DNA-dependent RNA polymerase catalyzes the transcription of DNA into RNA using the four ribonucleoside triphosphates as substrates.</text>
</comment>
<comment type="catalytic activity">
    <reaction evidence="1">
        <text>RNA(n) + a ribonucleoside 5'-triphosphate = RNA(n+1) + diphosphate</text>
        <dbReference type="Rhea" id="RHEA:21248"/>
        <dbReference type="Rhea" id="RHEA-COMP:14527"/>
        <dbReference type="Rhea" id="RHEA-COMP:17342"/>
        <dbReference type="ChEBI" id="CHEBI:33019"/>
        <dbReference type="ChEBI" id="CHEBI:61557"/>
        <dbReference type="ChEBI" id="CHEBI:140395"/>
        <dbReference type="EC" id="2.7.7.6"/>
    </reaction>
</comment>
<comment type="cofactor">
    <cofactor evidence="1">
        <name>Mg(2+)</name>
        <dbReference type="ChEBI" id="CHEBI:18420"/>
    </cofactor>
    <text evidence="1">Binds 1 Mg(2+) ion per subunit.</text>
</comment>
<comment type="cofactor">
    <cofactor evidence="1">
        <name>Zn(2+)</name>
        <dbReference type="ChEBI" id="CHEBI:29105"/>
    </cofactor>
    <text evidence="1">Binds 2 Zn(2+) ions per subunit.</text>
</comment>
<comment type="subunit">
    <text evidence="1">The RNAP catalytic core consists of 2 alpha, 1 beta, 1 beta' and 1 omega subunit. When a sigma factor is associated with the core the holoenzyme is formed, which can initiate transcription.</text>
</comment>
<comment type="similarity">
    <text evidence="1">Belongs to the RNA polymerase beta' chain family.</text>
</comment>
<keyword id="KW-0240">DNA-directed RNA polymerase</keyword>
<keyword id="KW-0460">Magnesium</keyword>
<keyword id="KW-0479">Metal-binding</keyword>
<keyword id="KW-0548">Nucleotidyltransferase</keyword>
<keyword id="KW-1185">Reference proteome</keyword>
<keyword id="KW-0804">Transcription</keyword>
<keyword id="KW-0808">Transferase</keyword>
<keyword id="KW-0862">Zinc</keyword>
<protein>
    <recommendedName>
        <fullName evidence="1">DNA-directed RNA polymerase subunit beta'</fullName>
        <shortName evidence="1">RNAP subunit beta'</shortName>
        <ecNumber evidence="1">2.7.7.6</ecNumber>
    </recommendedName>
    <alternativeName>
        <fullName evidence="1">RNA polymerase subunit beta'</fullName>
    </alternativeName>
    <alternativeName>
        <fullName evidence="1">Transcriptase subunit beta'</fullName>
    </alternativeName>
</protein>
<accession>Q60A05</accession>
<gene>
    <name evidence="1" type="primary">rpoC</name>
    <name type="ordered locus">MCA1067</name>
</gene>
<proteinExistence type="inferred from homology"/>
<name>RPOC_METCA</name>